<gene>
    <name evidence="4" type="primary">bcl-7</name>
    <name evidence="4" type="ORF">C28H8.1</name>
</gene>
<feature type="chain" id="PRO_0000065197" description="BCL7-like protein" evidence="3">
    <location>
        <begin position="1"/>
        <end position="146"/>
    </location>
</feature>
<feature type="region of interest" description="Disordered" evidence="1">
    <location>
        <begin position="59"/>
        <end position="146"/>
    </location>
</feature>
<feature type="compositionally biased region" description="Polar residues" evidence="1">
    <location>
        <begin position="75"/>
        <end position="90"/>
    </location>
</feature>
<feature type="compositionally biased region" description="Polar residues" evidence="1">
    <location>
        <begin position="113"/>
        <end position="134"/>
    </location>
</feature>
<feature type="compositionally biased region" description="Basic and acidic residues" evidence="1">
    <location>
        <begin position="135"/>
        <end position="146"/>
    </location>
</feature>
<name>BCL7_CAEEL</name>
<accession>Q09242</accession>
<dbReference type="EMBL" id="FO080703">
    <property type="protein sequence ID" value="CCD65961.1"/>
    <property type="molecule type" value="Genomic_DNA"/>
</dbReference>
<dbReference type="PIR" id="E88470">
    <property type="entry name" value="E88470"/>
</dbReference>
<dbReference type="RefSeq" id="NP_498287.1">
    <property type="nucleotide sequence ID" value="NM_065886.6"/>
</dbReference>
<dbReference type="BioGRID" id="41059">
    <property type="interactions" value="1"/>
</dbReference>
<dbReference type="FunCoup" id="Q09242">
    <property type="interactions" value="2033"/>
</dbReference>
<dbReference type="IntAct" id="Q09242">
    <property type="interactions" value="1"/>
</dbReference>
<dbReference type="STRING" id="6239.C28H8.1.1"/>
<dbReference type="PaxDb" id="6239-C28H8.1"/>
<dbReference type="PeptideAtlas" id="Q09242"/>
<dbReference type="EnsemblMetazoa" id="C28H8.1.1">
    <property type="protein sequence ID" value="C28H8.1.1"/>
    <property type="gene ID" value="WBGene00016192"/>
</dbReference>
<dbReference type="GeneID" id="175838"/>
<dbReference type="KEGG" id="cel:CELE_C28H8.1"/>
<dbReference type="UCSC" id="C28H8.1">
    <property type="organism name" value="c. elegans"/>
</dbReference>
<dbReference type="AGR" id="WB:WBGene00016192"/>
<dbReference type="CTD" id="175838"/>
<dbReference type="WormBase" id="C28H8.1">
    <property type="protein sequence ID" value="CE01820"/>
    <property type="gene ID" value="WBGene00016192"/>
    <property type="gene designation" value="bcl-7"/>
</dbReference>
<dbReference type="eggNOG" id="KOG4095">
    <property type="taxonomic scope" value="Eukaryota"/>
</dbReference>
<dbReference type="GeneTree" id="ENSGT00390000002172"/>
<dbReference type="HOGENOM" id="CLU_110835_2_1_1"/>
<dbReference type="InParanoid" id="Q09242"/>
<dbReference type="OMA" id="WEKKWIV"/>
<dbReference type="OrthoDB" id="5989898at2759"/>
<dbReference type="PhylomeDB" id="Q09242"/>
<dbReference type="PRO" id="PR:Q09242"/>
<dbReference type="Proteomes" id="UP000001940">
    <property type="component" value="Chromosome III"/>
</dbReference>
<dbReference type="Bgee" id="WBGene00016192">
    <property type="expression patterns" value="Expressed in embryo and 4 other cell types or tissues"/>
</dbReference>
<dbReference type="GO" id="GO:0005634">
    <property type="term" value="C:nucleus"/>
    <property type="evidence" value="ECO:0007669"/>
    <property type="project" value="UniProtKB-SubCell"/>
</dbReference>
<dbReference type="GO" id="GO:0006915">
    <property type="term" value="P:apoptotic process"/>
    <property type="evidence" value="ECO:0007669"/>
    <property type="project" value="UniProtKB-KW"/>
</dbReference>
<dbReference type="GO" id="GO:0030154">
    <property type="term" value="P:cell differentiation"/>
    <property type="evidence" value="ECO:0007669"/>
    <property type="project" value="UniProtKB-KW"/>
</dbReference>
<dbReference type="GO" id="GO:0016055">
    <property type="term" value="P:Wnt signaling pathway"/>
    <property type="evidence" value="ECO:0007669"/>
    <property type="project" value="UniProtKB-KW"/>
</dbReference>
<dbReference type="InterPro" id="IPR006804">
    <property type="entry name" value="BCL7"/>
</dbReference>
<dbReference type="PANTHER" id="PTHR12767">
    <property type="entry name" value="BCL7 RELATED"/>
    <property type="match status" value="1"/>
</dbReference>
<dbReference type="PANTHER" id="PTHR12767:SF9">
    <property type="entry name" value="BCL7-LIKE"/>
    <property type="match status" value="1"/>
</dbReference>
<dbReference type="Pfam" id="PF04714">
    <property type="entry name" value="BCL_N"/>
    <property type="match status" value="1"/>
</dbReference>
<organism>
    <name type="scientific">Caenorhabditis elegans</name>
    <dbReference type="NCBI Taxonomy" id="6239"/>
    <lineage>
        <taxon>Eukaryota</taxon>
        <taxon>Metazoa</taxon>
        <taxon>Ecdysozoa</taxon>
        <taxon>Nematoda</taxon>
        <taxon>Chromadorea</taxon>
        <taxon>Rhabditida</taxon>
        <taxon>Rhabditina</taxon>
        <taxon>Rhabditomorpha</taxon>
        <taxon>Rhabditoidea</taxon>
        <taxon>Rhabditidae</taxon>
        <taxon>Peloderinae</taxon>
        <taxon>Caenorhabditis</taxon>
    </lineage>
</organism>
<protein>
    <recommendedName>
        <fullName evidence="3">BCL7-like protein</fullName>
    </recommendedName>
</protein>
<proteinExistence type="evidence at transcript level"/>
<sequence length="146" mass="16668">MYSANRSHRAETRNRSKDELRKVINSLEKVRRWEKKLVLIKDTNIRIYKWVPVSAQNIMAPPKIKEVKEVDEESNQVPSAENSQDSTSVTQPPPQFDINEDSNFSTGDHFDSDSNQTFEPQNYQGGATGSTDFSSMRDAEMTSKQP</sequence>
<evidence type="ECO:0000256" key="1">
    <source>
        <dbReference type="SAM" id="MobiDB-lite"/>
    </source>
</evidence>
<evidence type="ECO:0000269" key="2">
    <source>
    </source>
</evidence>
<evidence type="ECO:0000305" key="3"/>
<evidence type="ECO:0000312" key="4">
    <source>
        <dbReference type="WormBase" id="C28H8.1"/>
    </source>
</evidence>
<keyword id="KW-0053">Apoptosis</keyword>
<keyword id="KW-0221">Differentiation</keyword>
<keyword id="KW-0539">Nucleus</keyword>
<keyword id="KW-1185">Reference proteome</keyword>
<keyword id="KW-0879">Wnt signaling pathway</keyword>
<reference key="1">
    <citation type="journal article" date="1998" name="Science">
        <title>Genome sequence of the nematode C. elegans: a platform for investigating biology.</title>
        <authorList>
            <consortium name="The C. elegans sequencing consortium"/>
        </authorList>
    </citation>
    <scope>NUCLEOTIDE SEQUENCE [LARGE SCALE GENOMIC DNA]</scope>
    <source>
        <strain>Bristol N2</strain>
    </source>
</reference>
<reference key="2">
    <citation type="journal article" date="2015" name="PLoS Genet.">
        <title>The tumor suppressor BCL7B functions in the Wnt signaling pathway.</title>
        <authorList>
            <person name="Uehara T."/>
            <person name="Kage-Nakadai E."/>
            <person name="Yoshina S."/>
            <person name="Imae R."/>
            <person name="Mitani S."/>
        </authorList>
    </citation>
    <scope>FUNCTION</scope>
    <scope>SUBCELLULAR LOCATION</scope>
    <scope>TISSUE SPECIFICITY</scope>
    <scope>DEVELOPMENTAL STAGE</scope>
    <scope>DISRUPTION PHENOTYPE</scope>
</reference>
<comment type="function">
    <text evidence="2">Required for the terminal differentiation of seam cells, and the differentiation of distal tip cells important for normal somatic gonad and germ cell development. Plays a role in the Wnt signaling pathway, regulating the expression of beta-catenin homologs wrm-1, bar-1 and sys-1, and the localization of wrm-1 and the wnt signaling pathway component pop-1 during asymmetric cell division of seam cells and the Z-cell lineage of the somatic gonad, respectively. May have a pro-apoptotic role, possibly linked to the negative regulation of expression of anti-apoptotic factor ced-9.</text>
</comment>
<comment type="subcellular location">
    <subcellularLocation>
        <location evidence="2">Nucleus</location>
    </subcellularLocation>
</comment>
<comment type="tissue specificity">
    <text evidence="2">Ubiquitous.</text>
</comment>
<comment type="developmental stage">
    <text evidence="2">Expressed in the hypodermis from embryogenesis to adulthood.</text>
</comment>
<comment type="disruption phenotype">
    <text evidence="2">Animals are sterile producing no oocytes, display a protruding vulva phenotype past the young adult stage of development, and have disrupted or no alae formation. Fewer seam cells in larval stages post the L1 larval stage of development and impaired seam cell differentiation with large and irregularly shaped nuclei in seam cell-derived hyp7 cells. Defective gonadal growth and proliferation whereby gonads are thin and shortened probably due to decreased mitosis, and abnormal germ cell nuclei which are irregularly shaped and enlargened. Mis-localization of the beta-catenin homolog wrm-1 in the daughter cells of seam cells following cell division with expression equal to or stronger in the anterior daughter cells as opposed to the posterior daughter cells in 50% of mutants. Aberrant asymmetric localization of the wnt signaling component pop-1 in the nuclei of Z1 and Z4 somatic gonadal precursor cells. Increased expression of anti-apoptotic factor ced-9. RNAi-mediated knockdown results in egg-laying defective and burst vulva phenotypes.</text>
</comment>
<comment type="similarity">
    <text evidence="3">Belongs to the BCL7 family.</text>
</comment>